<name>DEOD_SALPB</name>
<dbReference type="EC" id="2.4.2.1" evidence="2"/>
<dbReference type="EMBL" id="CP000886">
    <property type="protein sequence ID" value="ABX71015.1"/>
    <property type="molecule type" value="Genomic_DNA"/>
</dbReference>
<dbReference type="RefSeq" id="WP_000224865.1">
    <property type="nucleotide sequence ID" value="NC_010102.1"/>
</dbReference>
<dbReference type="SMR" id="A9N7E3"/>
<dbReference type="KEGG" id="spq:SPAB_05750"/>
<dbReference type="PATRIC" id="fig|1016998.12.peg.5387"/>
<dbReference type="HOGENOM" id="CLU_068457_2_0_6"/>
<dbReference type="BioCyc" id="SENT1016998:SPAB_RS23465-MONOMER"/>
<dbReference type="Proteomes" id="UP000008556">
    <property type="component" value="Chromosome"/>
</dbReference>
<dbReference type="GO" id="GO:0005829">
    <property type="term" value="C:cytosol"/>
    <property type="evidence" value="ECO:0007669"/>
    <property type="project" value="TreeGrafter"/>
</dbReference>
<dbReference type="GO" id="GO:0004731">
    <property type="term" value="F:purine-nucleoside phosphorylase activity"/>
    <property type="evidence" value="ECO:0007669"/>
    <property type="project" value="UniProtKB-UniRule"/>
</dbReference>
<dbReference type="GO" id="GO:0006152">
    <property type="term" value="P:purine nucleoside catabolic process"/>
    <property type="evidence" value="ECO:0007669"/>
    <property type="project" value="TreeGrafter"/>
</dbReference>
<dbReference type="CDD" id="cd09006">
    <property type="entry name" value="PNP_EcPNPI-like"/>
    <property type="match status" value="1"/>
</dbReference>
<dbReference type="FunFam" id="3.40.50.1580:FF:000002">
    <property type="entry name" value="Purine nucleoside phosphorylase DeoD-type"/>
    <property type="match status" value="1"/>
</dbReference>
<dbReference type="Gene3D" id="3.40.50.1580">
    <property type="entry name" value="Nucleoside phosphorylase domain"/>
    <property type="match status" value="1"/>
</dbReference>
<dbReference type="HAMAP" id="MF_01627">
    <property type="entry name" value="Pur_nucleosid_phosp"/>
    <property type="match status" value="1"/>
</dbReference>
<dbReference type="InterPro" id="IPR004402">
    <property type="entry name" value="DeoD-type"/>
</dbReference>
<dbReference type="InterPro" id="IPR018016">
    <property type="entry name" value="Nucleoside_phosphorylase_CS"/>
</dbReference>
<dbReference type="InterPro" id="IPR000845">
    <property type="entry name" value="Nucleoside_phosphorylase_d"/>
</dbReference>
<dbReference type="InterPro" id="IPR035994">
    <property type="entry name" value="Nucleoside_phosphorylase_sf"/>
</dbReference>
<dbReference type="NCBIfam" id="TIGR00107">
    <property type="entry name" value="deoD"/>
    <property type="match status" value="1"/>
</dbReference>
<dbReference type="NCBIfam" id="NF004489">
    <property type="entry name" value="PRK05819.1"/>
    <property type="match status" value="1"/>
</dbReference>
<dbReference type="NCBIfam" id="NF009914">
    <property type="entry name" value="PRK13374.1"/>
    <property type="match status" value="1"/>
</dbReference>
<dbReference type="PANTHER" id="PTHR43691:SF2">
    <property type="entry name" value="PURINE NUCLEOSIDE PHOSPHORYLASE DEOD-TYPE"/>
    <property type="match status" value="1"/>
</dbReference>
<dbReference type="PANTHER" id="PTHR43691">
    <property type="entry name" value="URIDINE PHOSPHORYLASE"/>
    <property type="match status" value="1"/>
</dbReference>
<dbReference type="Pfam" id="PF01048">
    <property type="entry name" value="PNP_UDP_1"/>
    <property type="match status" value="1"/>
</dbReference>
<dbReference type="SUPFAM" id="SSF53167">
    <property type="entry name" value="Purine and uridine phosphorylases"/>
    <property type="match status" value="1"/>
</dbReference>
<dbReference type="PROSITE" id="PS01232">
    <property type="entry name" value="PNP_UDP_1"/>
    <property type="match status" value="1"/>
</dbReference>
<proteinExistence type="inferred from homology"/>
<gene>
    <name evidence="2" type="primary">deoD</name>
    <name type="ordered locus">SPAB_05750</name>
</gene>
<accession>A9N7E3</accession>
<sequence>MATPHINAEMGDFADVVLMPGDPLRAKHIAETFLEDVREVNNVRGMLGFTGTYKGRKISVMGHGMGIPSCSIYTKELITDFGVKKIIRVGSCGAVRMDVKLRDVVIGMGACTDSKVNRIRFKDHDFAAIADFDMVRNAVDAAKALGVDARVGNLFSADLFYSPDGEMFDVMEKYGVLGVEMEAAGIYGVAAEFGAKALTICTVSDHIRTHEQTTAAERQTTFNDMIKIALESVLLGDQE</sequence>
<comment type="function">
    <text evidence="2">Catalyzes the reversible phosphorolytic breakdown of the N-glycosidic bond in the beta-(deoxy)ribonucleoside molecules, with the formation of the corresponding free purine bases and pentose-1-phosphate.</text>
</comment>
<comment type="catalytic activity">
    <reaction evidence="2">
        <text>a purine D-ribonucleoside + phosphate = a purine nucleobase + alpha-D-ribose 1-phosphate</text>
        <dbReference type="Rhea" id="RHEA:19805"/>
        <dbReference type="ChEBI" id="CHEBI:26386"/>
        <dbReference type="ChEBI" id="CHEBI:43474"/>
        <dbReference type="ChEBI" id="CHEBI:57720"/>
        <dbReference type="ChEBI" id="CHEBI:142355"/>
        <dbReference type="EC" id="2.4.2.1"/>
    </reaction>
</comment>
<comment type="catalytic activity">
    <reaction evidence="2">
        <text>a purine 2'-deoxy-D-ribonucleoside + phosphate = a purine nucleobase + 2-deoxy-alpha-D-ribose 1-phosphate</text>
        <dbReference type="Rhea" id="RHEA:36431"/>
        <dbReference type="ChEBI" id="CHEBI:26386"/>
        <dbReference type="ChEBI" id="CHEBI:43474"/>
        <dbReference type="ChEBI" id="CHEBI:57259"/>
        <dbReference type="ChEBI" id="CHEBI:142361"/>
        <dbReference type="EC" id="2.4.2.1"/>
    </reaction>
</comment>
<comment type="subunit">
    <text evidence="2">Homohexamer; trimer of homodimers.</text>
</comment>
<comment type="similarity">
    <text evidence="2">Belongs to the PNP/UDP phosphorylase family.</text>
</comment>
<protein>
    <recommendedName>
        <fullName evidence="2">Purine nucleoside phosphorylase DeoD-type</fullName>
        <shortName evidence="2">PNP</shortName>
        <ecNumber evidence="2">2.4.2.1</ecNumber>
    </recommendedName>
</protein>
<organism>
    <name type="scientific">Salmonella paratyphi B (strain ATCC BAA-1250 / SPB7)</name>
    <dbReference type="NCBI Taxonomy" id="1016998"/>
    <lineage>
        <taxon>Bacteria</taxon>
        <taxon>Pseudomonadati</taxon>
        <taxon>Pseudomonadota</taxon>
        <taxon>Gammaproteobacteria</taxon>
        <taxon>Enterobacterales</taxon>
        <taxon>Enterobacteriaceae</taxon>
        <taxon>Salmonella</taxon>
    </lineage>
</organism>
<evidence type="ECO:0000250" key="1">
    <source>
        <dbReference type="UniProtKB" id="P50389"/>
    </source>
</evidence>
<evidence type="ECO:0000255" key="2">
    <source>
        <dbReference type="HAMAP-Rule" id="MF_01627"/>
    </source>
</evidence>
<reference key="1">
    <citation type="submission" date="2007-11" db="EMBL/GenBank/DDBJ databases">
        <authorList>
            <consortium name="The Salmonella enterica serovar Paratyphi B Genome Sequencing Project"/>
            <person name="McClelland M."/>
            <person name="Sanderson E.K."/>
            <person name="Porwollik S."/>
            <person name="Spieth J."/>
            <person name="Clifton W.S."/>
            <person name="Fulton R."/>
            <person name="Cordes M."/>
            <person name="Wollam A."/>
            <person name="Shah N."/>
            <person name="Pepin K."/>
            <person name="Bhonagiri V."/>
            <person name="Nash W."/>
            <person name="Johnson M."/>
            <person name="Thiruvilangam P."/>
            <person name="Wilson R."/>
        </authorList>
    </citation>
    <scope>NUCLEOTIDE SEQUENCE [LARGE SCALE GENOMIC DNA]</scope>
    <source>
        <strain>ATCC BAA-1250 / SPB7</strain>
    </source>
</reference>
<keyword id="KW-0328">Glycosyltransferase</keyword>
<keyword id="KW-0808">Transferase</keyword>
<feature type="chain" id="PRO_1000088106" description="Purine nucleoside phosphorylase DeoD-type">
    <location>
        <begin position="1"/>
        <end position="239"/>
    </location>
</feature>
<feature type="active site" description="Proton donor" evidence="2">
    <location>
        <position position="205"/>
    </location>
</feature>
<feature type="binding site" evidence="1">
    <location>
        <position position="5"/>
    </location>
    <ligand>
        <name>a purine D-ribonucleoside</name>
        <dbReference type="ChEBI" id="CHEBI:142355"/>
        <note>ligand shared between dimeric partners</note>
    </ligand>
</feature>
<feature type="binding site" description="in other chain" evidence="1">
    <location>
        <position position="21"/>
    </location>
    <ligand>
        <name>phosphate</name>
        <dbReference type="ChEBI" id="CHEBI:43474"/>
        <note>ligand shared between dimeric partners</note>
    </ligand>
</feature>
<feature type="binding site" description="in other chain" evidence="1">
    <location>
        <position position="25"/>
    </location>
    <ligand>
        <name>phosphate</name>
        <dbReference type="ChEBI" id="CHEBI:43474"/>
        <note>ligand shared between dimeric partners</note>
    </ligand>
</feature>
<feature type="binding site" evidence="1">
    <location>
        <position position="44"/>
    </location>
    <ligand>
        <name>phosphate</name>
        <dbReference type="ChEBI" id="CHEBI:43474"/>
        <note>ligand shared between dimeric partners</note>
    </ligand>
</feature>
<feature type="binding site" description="in other chain" evidence="1">
    <location>
        <begin position="88"/>
        <end position="91"/>
    </location>
    <ligand>
        <name>phosphate</name>
        <dbReference type="ChEBI" id="CHEBI:43474"/>
        <note>ligand shared between dimeric partners</note>
    </ligand>
</feature>
<feature type="binding site" description="in other chain" evidence="1">
    <location>
        <begin position="180"/>
        <end position="182"/>
    </location>
    <ligand>
        <name>a purine D-ribonucleoside</name>
        <dbReference type="ChEBI" id="CHEBI:142355"/>
        <note>ligand shared between dimeric partners</note>
    </ligand>
</feature>
<feature type="binding site" description="in other chain" evidence="1">
    <location>
        <begin position="204"/>
        <end position="205"/>
    </location>
    <ligand>
        <name>a purine D-ribonucleoside</name>
        <dbReference type="ChEBI" id="CHEBI:142355"/>
        <note>ligand shared between dimeric partners</note>
    </ligand>
</feature>
<feature type="site" description="Important for catalytic activity" evidence="2">
    <location>
        <position position="218"/>
    </location>
</feature>